<name>ATP22_VANPO</name>
<feature type="transit peptide" description="Mitochondrion" evidence="2">
    <location>
        <begin position="1"/>
        <end position="15"/>
    </location>
</feature>
<feature type="chain" id="PRO_0000330049" description="Mitochondrial translation factor ATP22">
    <location>
        <begin position="16"/>
        <end position="710"/>
    </location>
</feature>
<feature type="region of interest" description="Disordered" evidence="3">
    <location>
        <begin position="657"/>
        <end position="683"/>
    </location>
</feature>
<proteinExistence type="inferred from homology"/>
<comment type="function">
    <text evidence="1">Translation factor specific for subunit 6 of the mitochondrial ATPase. Required for assembly of the CF(0) component of the ATPase (By similarity).</text>
</comment>
<comment type="subcellular location">
    <subcellularLocation>
        <location evidence="1">Mitochondrion inner membrane</location>
        <topology evidence="1">Peripheral membrane protein</topology>
        <orientation evidence="1">Matrix side</orientation>
    </subcellularLocation>
</comment>
<comment type="similarity">
    <text evidence="4">Belongs to the ATP22 family.</text>
</comment>
<accession>A7THU3</accession>
<reference key="1">
    <citation type="journal article" date="2007" name="Proc. Natl. Acad. Sci. U.S.A.">
        <title>Independent sorting-out of thousands of duplicated gene pairs in two yeast species descended from a whole-genome duplication.</title>
        <authorList>
            <person name="Scannell D.R."/>
            <person name="Frank A.C."/>
            <person name="Conant G.C."/>
            <person name="Byrne K.P."/>
            <person name="Woolfit M."/>
            <person name="Wolfe K.H."/>
        </authorList>
    </citation>
    <scope>NUCLEOTIDE SEQUENCE [LARGE SCALE GENOMIC DNA]</scope>
    <source>
        <strain>ATCC 22028 / DSM 70294 / BCRC 21397 / CBS 2163 / NBRC 10782 / NRRL Y-8283 / UCD 57-17</strain>
    </source>
</reference>
<organism>
    <name type="scientific">Vanderwaltozyma polyspora (strain ATCC 22028 / DSM 70294 / BCRC 21397 / CBS 2163 / NBRC 10782 / NRRL Y-8283 / UCD 57-17)</name>
    <name type="common">Kluyveromyces polysporus</name>
    <dbReference type="NCBI Taxonomy" id="436907"/>
    <lineage>
        <taxon>Eukaryota</taxon>
        <taxon>Fungi</taxon>
        <taxon>Dikarya</taxon>
        <taxon>Ascomycota</taxon>
        <taxon>Saccharomycotina</taxon>
        <taxon>Saccharomycetes</taxon>
        <taxon>Saccharomycetales</taxon>
        <taxon>Saccharomycetaceae</taxon>
        <taxon>Vanderwaltozyma</taxon>
    </lineage>
</organism>
<evidence type="ECO:0000250" key="1"/>
<evidence type="ECO:0000255" key="2"/>
<evidence type="ECO:0000256" key="3">
    <source>
        <dbReference type="SAM" id="MobiDB-lite"/>
    </source>
</evidence>
<evidence type="ECO:0000305" key="4"/>
<keyword id="KW-0472">Membrane</keyword>
<keyword id="KW-0496">Mitochondrion</keyword>
<keyword id="KW-0999">Mitochondrion inner membrane</keyword>
<keyword id="KW-1185">Reference proteome</keyword>
<keyword id="KW-0809">Transit peptide</keyword>
<keyword id="KW-0810">Translation regulation</keyword>
<protein>
    <recommendedName>
        <fullName>Mitochondrial translation factor ATP22</fullName>
    </recommendedName>
</protein>
<gene>
    <name type="primary">ATP22</name>
    <name type="ORF">Kpol_1031p9</name>
</gene>
<dbReference type="EMBL" id="DS480393">
    <property type="protein sequence ID" value="EDO18105.1"/>
    <property type="molecule type" value="Genomic_DNA"/>
</dbReference>
<dbReference type="RefSeq" id="XP_001645963.1">
    <property type="nucleotide sequence ID" value="XM_001645913.1"/>
</dbReference>
<dbReference type="FunCoup" id="A7THU3">
    <property type="interactions" value="39"/>
</dbReference>
<dbReference type="GeneID" id="5546371"/>
<dbReference type="KEGG" id="vpo:Kpol_1031p9"/>
<dbReference type="eggNOG" id="ENOG502QUX9">
    <property type="taxonomic scope" value="Eukaryota"/>
</dbReference>
<dbReference type="HOGENOM" id="CLU_024415_0_0_1"/>
<dbReference type="InParanoid" id="A7THU3"/>
<dbReference type="OMA" id="HINNCSE"/>
<dbReference type="OrthoDB" id="4064138at2759"/>
<dbReference type="PhylomeDB" id="A7THU3"/>
<dbReference type="Proteomes" id="UP000000267">
    <property type="component" value="Unassembled WGS sequence"/>
</dbReference>
<dbReference type="GO" id="GO:0005743">
    <property type="term" value="C:mitochondrial inner membrane"/>
    <property type="evidence" value="ECO:0007669"/>
    <property type="project" value="UniProtKB-SubCell"/>
</dbReference>
<dbReference type="GO" id="GO:0006417">
    <property type="term" value="P:regulation of translation"/>
    <property type="evidence" value="ECO:0007669"/>
    <property type="project" value="UniProtKB-KW"/>
</dbReference>
<sequence length="710" mass="83992">MIRFVQIHGLQLVRHNSTISTISGKIQNDIRLMIDQKTPRAFLKQNSNSTKELVKILDVVDKPDEIKPIKRLLMKKFKQNYSPFINKLRDASENPTKLHLTYIKQIGQEYRVLFNKYIDEIISNNEIDTIDKKNCIYEMINLQNELYPTIGEKYGWFLTDKIHKWFWENIDKNESFTHYYFLIQNNVNLSSSYHILQFQKRLLKGSQLEFELASFQLFLHKPEYEHIFRRKFIILNSFDSIRSFVNLLIQKNDLRFLRMYFNSMLDSMKRPSFKTNPDTVEFDSRLNLIYFNISLLNYLSKIEDIKMFSSTLRILANETSKIQTNELNKDNKIRLSNISNLLLSPLSSSITLLRNKGMYDEAFDLLSLMRKTPMVHNSVFKNFLIGHLISCLRSFNDPKLSLQYVTSAYRRKRVALFLNQLGLWGWVYHGKSYTLSNQELDTEYQKIKNTLPRSMVSIQYPPLPVLTELYITVLNTFSKTMDKENFKVFLLDLYQRYKKTILPMRSHNLYFQQNTGILNAFLKHVRYSINDHLLSLTILKDFYNESDSHRFKPTDGTSPFSIVVYQNEKLSNRDISKVLELMDSLEIPLDFKFCVAMVYHYHSRNNIPEALVWYKKILDSKFNVEHMGLIKLITENGWEYPDHFDMKLLENLDEQKQSSTEEEDFLISNTKEDLETEAPTEATTDSEMIIKEFQAMISNTNHVLKKPLLD</sequence>